<comment type="function">
    <text evidence="1">Possible voltage-gated potassium channel (Kv) blocker.</text>
</comment>
<comment type="subcellular location">
    <subcellularLocation>
        <location evidence="5">Secreted</location>
    </subcellularLocation>
    <subcellularLocation>
        <location evidence="5">Nematocyst</location>
    </subcellularLocation>
</comment>
<comment type="mass spectrometry" mass="3215.2" method="MALDI" evidence="2"/>
<comment type="similarity">
    <text evidence="6">Belongs to the sea anemone BBH family.</text>
</comment>
<organism>
    <name type="scientific">Bunodosoma cangicum</name>
    <name type="common">Sea anemone</name>
    <dbReference type="NCBI Taxonomy" id="138296"/>
    <lineage>
        <taxon>Eukaryota</taxon>
        <taxon>Metazoa</taxon>
        <taxon>Cnidaria</taxon>
        <taxon>Anthozoa</taxon>
        <taxon>Hexacorallia</taxon>
        <taxon>Actiniaria</taxon>
        <taxon>Actiniidae</taxon>
        <taxon>Bunodosoma</taxon>
    </lineage>
</organism>
<reference key="1">
    <citation type="journal article" date="2008" name="Comp. Biochem. Physiol.">
        <title>Proteomics of the neurotoxic fraction from the sea anemone Bunodosoma cangicum venom: novel peptides belonging to new classes of toxins.</title>
        <authorList>
            <person name="Zaharenko A.J."/>
            <person name="Ferreira W.A. Jr."/>
            <person name="Oliveira J.S."/>
            <person name="Richardson M."/>
            <person name="Pimenta D.C."/>
            <person name="Konno K."/>
            <person name="Portaro F.C."/>
            <person name="de Freitas J.C."/>
        </authorList>
    </citation>
    <scope>PROTEIN SEQUENCE</scope>
    <scope>MASS SPECTROMETRY</scope>
</reference>
<reference key="2">
    <citation type="journal article" date="2013" name="J. Biol. Chem.">
        <title>Sea anemone peptide with uncommon beta-hairpin structure inhibits acid-sensing ion channel 3 (ASIC3) and reveals analgesic activity.</title>
        <authorList>
            <person name="Osmakov D.I."/>
            <person name="Kozlov S.A."/>
            <person name="Andreev Y.A."/>
            <person name="Koshelev S.G."/>
            <person name="Sanamyan N.P."/>
            <person name="Sanamyan K.E."/>
            <person name="Dyachenko I.A."/>
            <person name="Bondarenko D.A."/>
            <person name="Murashev A.N."/>
            <person name="Mineev K.S."/>
            <person name="Arseniev A.S."/>
            <person name="Grishin E.V."/>
        </authorList>
    </citation>
    <scope>NOMENCLATURE</scope>
</reference>
<name>BBHA0_BUNCN</name>
<sequence length="27" mass="2985">NIVDVPCRDDYYRDSDGNCVCCKFGGA</sequence>
<feature type="chain" id="PRO_0000392953" description="Toxin Bcg III 21.00">
    <location>
        <begin position="1"/>
        <end position="27" status="greater than"/>
    </location>
</feature>
<feature type="non-terminal residue" evidence="3">
    <location>
        <position position="27"/>
    </location>
</feature>
<proteinExistence type="evidence at protein level"/>
<accession>P86466</accession>
<dbReference type="GO" id="GO:0005576">
    <property type="term" value="C:extracellular region"/>
    <property type="evidence" value="ECO:0007669"/>
    <property type="project" value="UniProtKB-SubCell"/>
</dbReference>
<dbReference type="GO" id="GO:0042151">
    <property type="term" value="C:nematocyst"/>
    <property type="evidence" value="ECO:0007669"/>
    <property type="project" value="UniProtKB-SubCell"/>
</dbReference>
<dbReference type="GO" id="GO:0015459">
    <property type="term" value="F:potassium channel regulator activity"/>
    <property type="evidence" value="ECO:0007669"/>
    <property type="project" value="UniProtKB-KW"/>
</dbReference>
<dbReference type="GO" id="GO:0090729">
    <property type="term" value="F:toxin activity"/>
    <property type="evidence" value="ECO:0007669"/>
    <property type="project" value="UniProtKB-KW"/>
</dbReference>
<protein>
    <recommendedName>
        <fullName evidence="3">Toxin Bcg III 21.00</fullName>
        <shortName evidence="3">Bcg 21.00</shortName>
    </recommendedName>
    <alternativeName>
        <fullName evidence="4">AnmTX BC 9a-2</fullName>
    </alternativeName>
</protein>
<evidence type="ECO:0000250" key="1">
    <source>
        <dbReference type="UniProtKB" id="P86467"/>
    </source>
</evidence>
<evidence type="ECO:0000269" key="2">
    <source>
    </source>
</evidence>
<evidence type="ECO:0000303" key="3">
    <source>
    </source>
</evidence>
<evidence type="ECO:0000303" key="4">
    <source>
    </source>
</evidence>
<evidence type="ECO:0000305" key="5"/>
<evidence type="ECO:0000305" key="6">
    <source>
    </source>
</evidence>
<keyword id="KW-0903">Direct protein sequencing</keyword>
<keyword id="KW-0872">Ion channel impairing toxin</keyword>
<keyword id="KW-0166">Nematocyst</keyword>
<keyword id="KW-0632">Potassium channel impairing toxin</keyword>
<keyword id="KW-0964">Secreted</keyword>
<keyword id="KW-0800">Toxin</keyword>
<keyword id="KW-1220">Voltage-gated potassium channel impairing toxin</keyword>